<organism>
    <name type="scientific">Aliivibrio fischeri (strain MJ11)</name>
    <name type="common">Vibrio fischeri</name>
    <dbReference type="NCBI Taxonomy" id="388396"/>
    <lineage>
        <taxon>Bacteria</taxon>
        <taxon>Pseudomonadati</taxon>
        <taxon>Pseudomonadota</taxon>
        <taxon>Gammaproteobacteria</taxon>
        <taxon>Vibrionales</taxon>
        <taxon>Vibrionaceae</taxon>
        <taxon>Aliivibrio</taxon>
    </lineage>
</organism>
<accession>B5FE11</accession>
<reference key="1">
    <citation type="submission" date="2008-08" db="EMBL/GenBank/DDBJ databases">
        <title>Complete sequence of Vibrio fischeri strain MJ11.</title>
        <authorList>
            <person name="Mandel M.J."/>
            <person name="Stabb E.V."/>
            <person name="Ruby E.G."/>
            <person name="Ferriera S."/>
            <person name="Johnson J."/>
            <person name="Kravitz S."/>
            <person name="Beeson K."/>
            <person name="Sutton G."/>
            <person name="Rogers Y.-H."/>
            <person name="Friedman R."/>
            <person name="Frazier M."/>
            <person name="Venter J.C."/>
        </authorList>
    </citation>
    <scope>NUCLEOTIDE SEQUENCE [LARGE SCALE GENOMIC DNA]</scope>
    <source>
        <strain>MJ11</strain>
    </source>
</reference>
<comment type="function">
    <text evidence="1">RNA chaperone with significant RNA binding, RNA strand exchange and RNA duplexing activities.</text>
</comment>
<comment type="subcellular location">
    <subcellularLocation>
        <location evidence="1">Cytoplasm</location>
    </subcellularLocation>
</comment>
<comment type="similarity">
    <text evidence="1">Belongs to the ProQ family.</text>
</comment>
<feature type="chain" id="PRO_1000133311" description="RNA chaperone ProQ">
    <location>
        <begin position="1"/>
        <end position="208"/>
    </location>
</feature>
<feature type="region of interest" description="Disordered" evidence="2">
    <location>
        <begin position="106"/>
        <end position="154"/>
    </location>
</feature>
<feature type="compositionally biased region" description="Basic and acidic residues" evidence="2">
    <location>
        <begin position="106"/>
        <end position="127"/>
    </location>
</feature>
<keyword id="KW-0143">Chaperone</keyword>
<keyword id="KW-0963">Cytoplasm</keyword>
<keyword id="KW-0694">RNA-binding</keyword>
<protein>
    <recommendedName>
        <fullName evidence="1">RNA chaperone ProQ</fullName>
    </recommendedName>
</protein>
<proteinExistence type="inferred from homology"/>
<sequence>MENSEKLANSKEVIAYIAERFPKCFILEGEAKPLKIGIFQDLAERLSDDPKVSKTQLRAGLRQYTSSWRYLHGVKPGASRVDLDGNPCGELEEEHIEHAKATLEESKAKVATRRKEQAKKAREEAKAKKTARAATPPKRRPQPAAKKVEQPVETRALNADEITVGNNVSVNMGKGNMPATIVEINKDDVRIRLSNGLQMVVKAENLRS</sequence>
<dbReference type="EMBL" id="CP001139">
    <property type="protein sequence ID" value="ACH65804.1"/>
    <property type="molecule type" value="Genomic_DNA"/>
</dbReference>
<dbReference type="RefSeq" id="WP_005419190.1">
    <property type="nucleotide sequence ID" value="NC_011184.1"/>
</dbReference>
<dbReference type="SMR" id="B5FE11"/>
<dbReference type="GeneID" id="54163951"/>
<dbReference type="KEGG" id="vfm:VFMJ11_1357"/>
<dbReference type="HOGENOM" id="CLU_113254_0_0_6"/>
<dbReference type="Proteomes" id="UP000001857">
    <property type="component" value="Chromosome I"/>
</dbReference>
<dbReference type="GO" id="GO:0005829">
    <property type="term" value="C:cytosol"/>
    <property type="evidence" value="ECO:0007669"/>
    <property type="project" value="TreeGrafter"/>
</dbReference>
<dbReference type="GO" id="GO:0033592">
    <property type="term" value="F:RNA strand annealing activity"/>
    <property type="evidence" value="ECO:0007669"/>
    <property type="project" value="UniProtKB-UniRule"/>
</dbReference>
<dbReference type="GO" id="GO:0034057">
    <property type="term" value="F:RNA strand-exchange activity"/>
    <property type="evidence" value="ECO:0007669"/>
    <property type="project" value="UniProtKB-UniRule"/>
</dbReference>
<dbReference type="GO" id="GO:0010608">
    <property type="term" value="P:post-transcriptional regulation of gene expression"/>
    <property type="evidence" value="ECO:0007669"/>
    <property type="project" value="InterPro"/>
</dbReference>
<dbReference type="FunFam" id="1.10.1710.10:FF:000001">
    <property type="entry name" value="RNA chaperone ProQ"/>
    <property type="match status" value="1"/>
</dbReference>
<dbReference type="Gene3D" id="1.10.1710.10">
    <property type="entry name" value="ProQ/FinO domain"/>
    <property type="match status" value="1"/>
</dbReference>
<dbReference type="HAMAP" id="MF_00749">
    <property type="entry name" value="ProQ"/>
    <property type="match status" value="1"/>
</dbReference>
<dbReference type="InterPro" id="IPR023529">
    <property type="entry name" value="ProQ"/>
</dbReference>
<dbReference type="InterPro" id="IPR016103">
    <property type="entry name" value="ProQ/FinO"/>
</dbReference>
<dbReference type="InterPro" id="IPR036442">
    <property type="entry name" value="ProQ/FinO_sf"/>
</dbReference>
<dbReference type="InterPro" id="IPR035236">
    <property type="entry name" value="ProQ_C"/>
</dbReference>
<dbReference type="NCBIfam" id="NF003434">
    <property type="entry name" value="PRK04950.1"/>
    <property type="match status" value="1"/>
</dbReference>
<dbReference type="PANTHER" id="PTHR38106">
    <property type="entry name" value="RNA CHAPERONE PROQ"/>
    <property type="match status" value="1"/>
</dbReference>
<dbReference type="PANTHER" id="PTHR38106:SF1">
    <property type="entry name" value="RNA CHAPERONE PROQ"/>
    <property type="match status" value="1"/>
</dbReference>
<dbReference type="Pfam" id="PF04352">
    <property type="entry name" value="ProQ"/>
    <property type="match status" value="1"/>
</dbReference>
<dbReference type="Pfam" id="PF17516">
    <property type="entry name" value="ProQ_C"/>
    <property type="match status" value="1"/>
</dbReference>
<dbReference type="SMART" id="SM00945">
    <property type="entry name" value="ProQ"/>
    <property type="match status" value="1"/>
</dbReference>
<dbReference type="SUPFAM" id="SSF48657">
    <property type="entry name" value="FinO-like"/>
    <property type="match status" value="1"/>
</dbReference>
<gene>
    <name evidence="1" type="primary">proQ</name>
    <name type="ordered locus">VFMJ11_1357</name>
</gene>
<name>PROQ_ALIFM</name>
<evidence type="ECO:0000255" key="1">
    <source>
        <dbReference type="HAMAP-Rule" id="MF_00749"/>
    </source>
</evidence>
<evidence type="ECO:0000256" key="2">
    <source>
        <dbReference type="SAM" id="MobiDB-lite"/>
    </source>
</evidence>